<organism>
    <name type="scientific">Mus musculus</name>
    <name type="common">Mouse</name>
    <dbReference type="NCBI Taxonomy" id="10090"/>
    <lineage>
        <taxon>Eukaryota</taxon>
        <taxon>Metazoa</taxon>
        <taxon>Chordata</taxon>
        <taxon>Craniata</taxon>
        <taxon>Vertebrata</taxon>
        <taxon>Euteleostomi</taxon>
        <taxon>Mammalia</taxon>
        <taxon>Eutheria</taxon>
        <taxon>Euarchontoglires</taxon>
        <taxon>Glires</taxon>
        <taxon>Rodentia</taxon>
        <taxon>Myomorpha</taxon>
        <taxon>Muroidea</taxon>
        <taxon>Muridae</taxon>
        <taxon>Murinae</taxon>
        <taxon>Mus</taxon>
        <taxon>Mus</taxon>
    </lineage>
</organism>
<proteinExistence type="evidence at protein level"/>
<accession>P49446</accession>
<accession>Q3U369</accession>
<accession>Q60986</accession>
<accession>Q61042</accession>
<accession>Q62134</accession>
<accession>Q62444</accession>
<accession>Q64496</accession>
<gene>
    <name type="primary">Ptpre</name>
    <name type="synonym">Ptpe</name>
</gene>
<protein>
    <recommendedName>
        <fullName>Receptor-type tyrosine-protein phosphatase epsilon</fullName>
        <shortName>Protein-tyrosine phosphatase epsilon</shortName>
        <shortName>R-PTP-epsilon</shortName>
        <ecNumber>3.1.3.48</ecNumber>
    </recommendedName>
</protein>
<dbReference type="EC" id="3.1.3.48"/>
<dbReference type="EMBL" id="U35368">
    <property type="protein sequence ID" value="AAC52281.1"/>
    <property type="molecule type" value="mRNA"/>
</dbReference>
<dbReference type="EMBL" id="U36758">
    <property type="protein sequence ID" value="AAC52331.1"/>
    <property type="molecule type" value="mRNA"/>
</dbReference>
<dbReference type="EMBL" id="U40280">
    <property type="protein sequence ID" value="AAB02190.1"/>
    <property type="molecule type" value="mRNA"/>
</dbReference>
<dbReference type="EMBL" id="D83484">
    <property type="protein sequence ID" value="BAA11927.1"/>
    <property type="molecule type" value="mRNA"/>
</dbReference>
<dbReference type="EMBL" id="U62387">
    <property type="protein sequence ID" value="AAB04553.1"/>
    <property type="molecule type" value="mRNA"/>
</dbReference>
<dbReference type="EMBL" id="AK154910">
    <property type="protein sequence ID" value="BAE32920.1"/>
    <property type="molecule type" value="mRNA"/>
</dbReference>
<dbReference type="EMBL" id="CH466531">
    <property type="protein sequence ID" value="EDL17805.1"/>
    <property type="molecule type" value="Genomic_DNA"/>
</dbReference>
<dbReference type="EMBL" id="CH466531">
    <property type="protein sequence ID" value="EDL17807.1"/>
    <property type="molecule type" value="Genomic_DNA"/>
</dbReference>
<dbReference type="EMBL" id="Z23052">
    <property type="protein sequence ID" value="CAA80587.1"/>
    <property type="molecule type" value="mRNA"/>
</dbReference>
<dbReference type="EMBL" id="Z23053">
    <property type="protein sequence ID" value="CAA80588.1"/>
    <property type="molecule type" value="mRNA"/>
</dbReference>
<dbReference type="CCDS" id="CCDS21944.1">
    <molecule id="P49446-1"/>
</dbReference>
<dbReference type="CCDS" id="CCDS85446.1">
    <molecule id="P49446-2"/>
</dbReference>
<dbReference type="PIR" id="B61180">
    <property type="entry name" value="B61180"/>
</dbReference>
<dbReference type="PIR" id="JC6132">
    <property type="entry name" value="JC6132"/>
</dbReference>
<dbReference type="PIR" id="S40284">
    <property type="entry name" value="S40284"/>
</dbReference>
<dbReference type="RefSeq" id="NP_001303607.1">
    <property type="nucleotide sequence ID" value="NM_001316678.1"/>
</dbReference>
<dbReference type="RefSeq" id="NP_001303608.1">
    <molecule id="P49446-1"/>
    <property type="nucleotide sequence ID" value="NM_001316679.1"/>
</dbReference>
<dbReference type="RefSeq" id="NP_001303609.1">
    <property type="nucleotide sequence ID" value="NM_001316680.1"/>
</dbReference>
<dbReference type="RefSeq" id="NP_001303610.1">
    <molecule id="P49446-2"/>
    <property type="nucleotide sequence ID" value="NM_001316681.1"/>
</dbReference>
<dbReference type="RefSeq" id="NP_035342.3">
    <molecule id="P49446-1"/>
    <property type="nucleotide sequence ID" value="NM_011212.3"/>
</dbReference>
<dbReference type="SMR" id="P49446"/>
<dbReference type="BioGRID" id="202496">
    <property type="interactions" value="15"/>
</dbReference>
<dbReference type="FunCoup" id="P49446">
    <property type="interactions" value="2537"/>
</dbReference>
<dbReference type="IntAct" id="P49446">
    <property type="interactions" value="4"/>
</dbReference>
<dbReference type="MINT" id="P49446"/>
<dbReference type="STRING" id="10090.ENSMUSP00000147656"/>
<dbReference type="GlyCosmos" id="P49446">
    <property type="glycosylation" value="2 sites, No reported glycans"/>
</dbReference>
<dbReference type="GlyGen" id="P49446">
    <property type="glycosylation" value="2 sites"/>
</dbReference>
<dbReference type="iPTMnet" id="P49446"/>
<dbReference type="PhosphoSitePlus" id="P49446"/>
<dbReference type="jPOST" id="P49446"/>
<dbReference type="PaxDb" id="10090-ENSMUSP00000073616"/>
<dbReference type="PeptideAtlas" id="P49446"/>
<dbReference type="ProteomicsDB" id="301973">
    <molecule id="P49446-1"/>
</dbReference>
<dbReference type="ProteomicsDB" id="301974">
    <molecule id="P49446-2"/>
</dbReference>
<dbReference type="ProteomicsDB" id="301975">
    <molecule id="P49446-3"/>
</dbReference>
<dbReference type="Antibodypedia" id="3004">
    <property type="antibodies" value="541 antibodies from 31 providers"/>
</dbReference>
<dbReference type="DNASU" id="19267"/>
<dbReference type="Ensembl" id="ENSMUST00000073961.8">
    <molecule id="P49446-1"/>
    <property type="protein sequence ID" value="ENSMUSP00000073616.7"/>
    <property type="gene ID" value="ENSMUSG00000041836.11"/>
</dbReference>
<dbReference type="Ensembl" id="ENSMUST00000209979.2">
    <molecule id="P49446-2"/>
    <property type="protein sequence ID" value="ENSMUSP00000147613.2"/>
    <property type="gene ID" value="ENSMUSG00000041836.11"/>
</dbReference>
<dbReference type="Ensembl" id="ENSMUST00000210833.2">
    <molecule id="P49446-1"/>
    <property type="protein sequence ID" value="ENSMUSP00000147313.2"/>
    <property type="gene ID" value="ENSMUSG00000041836.11"/>
</dbReference>
<dbReference type="Ensembl" id="ENSMUST00000211140.2">
    <molecule id="P49446-1"/>
    <property type="protein sequence ID" value="ENSMUSP00000147957.2"/>
    <property type="gene ID" value="ENSMUSG00000041836.11"/>
</dbReference>
<dbReference type="GeneID" id="19267"/>
<dbReference type="KEGG" id="mmu:19267"/>
<dbReference type="UCSC" id="uc009kee.1">
    <molecule id="P49446-1"/>
    <property type="organism name" value="mouse"/>
</dbReference>
<dbReference type="UCSC" id="uc009kek.1">
    <molecule id="P49446-2"/>
    <property type="organism name" value="mouse"/>
</dbReference>
<dbReference type="AGR" id="MGI:97813"/>
<dbReference type="CTD" id="5791"/>
<dbReference type="MGI" id="MGI:97813">
    <property type="gene designation" value="Ptpre"/>
</dbReference>
<dbReference type="VEuPathDB" id="HostDB:ENSMUSG00000041836"/>
<dbReference type="eggNOG" id="KOG4228">
    <property type="taxonomic scope" value="Eukaryota"/>
</dbReference>
<dbReference type="GeneTree" id="ENSGT00940000156570"/>
<dbReference type="HOGENOM" id="CLU_001645_8_2_1"/>
<dbReference type="InParanoid" id="P49446"/>
<dbReference type="OMA" id="FCVHSLQ"/>
<dbReference type="OrthoDB" id="6144703at2759"/>
<dbReference type="PhylomeDB" id="P49446"/>
<dbReference type="TreeFam" id="TF351829"/>
<dbReference type="SABIO-RK" id="P49446"/>
<dbReference type="BioGRID-ORCS" id="19267">
    <property type="hits" value="1 hit in 80 CRISPR screens"/>
</dbReference>
<dbReference type="ChiTaRS" id="Ptpre">
    <property type="organism name" value="mouse"/>
</dbReference>
<dbReference type="PRO" id="PR:P49446"/>
<dbReference type="Proteomes" id="UP000000589">
    <property type="component" value="Chromosome 7"/>
</dbReference>
<dbReference type="RNAct" id="P49446">
    <property type="molecule type" value="protein"/>
</dbReference>
<dbReference type="Bgee" id="ENSMUSG00000041836">
    <property type="expression patterns" value="Expressed in granulocyte and 201 other cell types or tissues"/>
</dbReference>
<dbReference type="ExpressionAtlas" id="P49446">
    <property type="expression patterns" value="baseline and differential"/>
</dbReference>
<dbReference type="GO" id="GO:0005737">
    <property type="term" value="C:cytoplasm"/>
    <property type="evidence" value="ECO:0000314"/>
    <property type="project" value="UniProtKB"/>
</dbReference>
<dbReference type="GO" id="GO:0005634">
    <property type="term" value="C:nucleus"/>
    <property type="evidence" value="ECO:0007669"/>
    <property type="project" value="Ensembl"/>
</dbReference>
<dbReference type="GO" id="GO:0005886">
    <property type="term" value="C:plasma membrane"/>
    <property type="evidence" value="ECO:0000314"/>
    <property type="project" value="UniProtKB"/>
</dbReference>
<dbReference type="GO" id="GO:0042802">
    <property type="term" value="F:identical protein binding"/>
    <property type="evidence" value="ECO:0000353"/>
    <property type="project" value="MGI"/>
</dbReference>
<dbReference type="GO" id="GO:0004725">
    <property type="term" value="F:protein tyrosine phosphatase activity"/>
    <property type="evidence" value="ECO:0000314"/>
    <property type="project" value="MGI"/>
</dbReference>
<dbReference type="GO" id="GO:0007185">
    <property type="term" value="P:cell surface receptor protein tyrosine phosphatase signaling pathway"/>
    <property type="evidence" value="ECO:0000314"/>
    <property type="project" value="MGI"/>
</dbReference>
<dbReference type="GO" id="GO:0046627">
    <property type="term" value="P:negative regulation of insulin receptor signaling pathway"/>
    <property type="evidence" value="ECO:0000314"/>
    <property type="project" value="UniProtKB"/>
</dbReference>
<dbReference type="GO" id="GO:0033003">
    <property type="term" value="P:regulation of mast cell activation"/>
    <property type="evidence" value="ECO:0000315"/>
    <property type="project" value="UniProtKB"/>
</dbReference>
<dbReference type="CDD" id="cd14620">
    <property type="entry name" value="R-PTPc-E-1"/>
    <property type="match status" value="1"/>
</dbReference>
<dbReference type="FunFam" id="3.90.190.10:FF:000007">
    <property type="entry name" value="Receptor-type tyrosine-protein phosphatase alpha"/>
    <property type="match status" value="1"/>
</dbReference>
<dbReference type="FunFam" id="3.90.190.10:FF:000022">
    <property type="entry name" value="Receptor-type tyrosine-protein phosphatase epsilon"/>
    <property type="match status" value="1"/>
</dbReference>
<dbReference type="Gene3D" id="3.90.190.10">
    <property type="entry name" value="Protein tyrosine phosphatase superfamily"/>
    <property type="match status" value="2"/>
</dbReference>
<dbReference type="InterPro" id="IPR029021">
    <property type="entry name" value="Prot-tyrosine_phosphatase-like"/>
</dbReference>
<dbReference type="InterPro" id="IPR050348">
    <property type="entry name" value="Protein-Tyr_Phosphatase"/>
</dbReference>
<dbReference type="InterPro" id="IPR000242">
    <property type="entry name" value="PTP_cat"/>
</dbReference>
<dbReference type="InterPro" id="IPR016130">
    <property type="entry name" value="Tyr_Pase_AS"/>
</dbReference>
<dbReference type="InterPro" id="IPR003595">
    <property type="entry name" value="Tyr_Pase_cat"/>
</dbReference>
<dbReference type="InterPro" id="IPR000387">
    <property type="entry name" value="Tyr_Pase_dom"/>
</dbReference>
<dbReference type="InterPro" id="IPR016336">
    <property type="entry name" value="Tyr_Pase_rcpt_a/e-type"/>
</dbReference>
<dbReference type="PANTHER" id="PTHR19134">
    <property type="entry name" value="RECEPTOR-TYPE TYROSINE-PROTEIN PHOSPHATASE"/>
    <property type="match status" value="1"/>
</dbReference>
<dbReference type="PANTHER" id="PTHR19134:SF499">
    <property type="entry name" value="RECEPTOR-TYPE TYROSINE-PROTEIN PHOSPHATASE EPSILON"/>
    <property type="match status" value="1"/>
</dbReference>
<dbReference type="Pfam" id="PF00102">
    <property type="entry name" value="Y_phosphatase"/>
    <property type="match status" value="2"/>
</dbReference>
<dbReference type="PIRSF" id="PIRSF002006">
    <property type="entry name" value="PTPR_alpha_epsilon"/>
    <property type="match status" value="1"/>
</dbReference>
<dbReference type="PRINTS" id="PR00700">
    <property type="entry name" value="PRTYPHPHTASE"/>
</dbReference>
<dbReference type="SMART" id="SM00194">
    <property type="entry name" value="PTPc"/>
    <property type="match status" value="2"/>
</dbReference>
<dbReference type="SMART" id="SM00404">
    <property type="entry name" value="PTPc_motif"/>
    <property type="match status" value="2"/>
</dbReference>
<dbReference type="SUPFAM" id="SSF52799">
    <property type="entry name" value="(Phosphotyrosine protein) phosphatases II"/>
    <property type="match status" value="2"/>
</dbReference>
<dbReference type="PROSITE" id="PS00383">
    <property type="entry name" value="TYR_PHOSPHATASE_1"/>
    <property type="match status" value="2"/>
</dbReference>
<dbReference type="PROSITE" id="PS50056">
    <property type="entry name" value="TYR_PHOSPHATASE_2"/>
    <property type="match status" value="2"/>
</dbReference>
<dbReference type="PROSITE" id="PS50055">
    <property type="entry name" value="TYR_PHOSPHATASE_PTP"/>
    <property type="match status" value="2"/>
</dbReference>
<comment type="function">
    <molecule>Isoform 1</molecule>
    <text evidence="1 11 12">Acts as a negative regulator of insulin receptor (IR) signaling and is involved in insulin-induced glucose metabolism mainly through direct dephosphorylation and inactivation of IR in hepatocytes and liver (By similarity). Plays a critical role in signaling transduction pathways and phosphoprotein network topology in red blood cells. May play a role in osteoclast formation and function.</text>
</comment>
<comment type="function">
    <molecule>Isoform 2</molecule>
    <text>Acts as a negative regulator of insulin receptor (IR) signaling in skeletal muscle. Regulates insulin-induced tyrosine phosphorylation of insulin receptor (IR) and insulin receptor substrate 1 (IRS-1), phosphorylation of protein kinase B and glycogen synthase kinase-3 and insulin induced stimulation of glucose uptake.</text>
</comment>
<comment type="function">
    <text>Isoform 1 and isoform 2 act as a negative regulator of FceRI-mediated signal transduction leading to cytokine production and degranulation, most likely by acting at the level of SYK to affect downstream events such as phosphorylation of SLP76 and LAT and mobilization of Ca(2+).</text>
</comment>
<comment type="catalytic activity">
    <reaction evidence="4">
        <text>O-phospho-L-tyrosyl-[protein] + H2O = L-tyrosyl-[protein] + phosphate</text>
        <dbReference type="Rhea" id="RHEA:10684"/>
        <dbReference type="Rhea" id="RHEA-COMP:10136"/>
        <dbReference type="Rhea" id="RHEA-COMP:20101"/>
        <dbReference type="ChEBI" id="CHEBI:15377"/>
        <dbReference type="ChEBI" id="CHEBI:43474"/>
        <dbReference type="ChEBI" id="CHEBI:46858"/>
        <dbReference type="ChEBI" id="CHEBI:61978"/>
        <dbReference type="EC" id="3.1.3.48"/>
    </reaction>
</comment>
<comment type="activity regulation">
    <molecule>Isoform 1</molecule>
    <text evidence="12">Inhibited by alendronate (ALN), orthovanadate, and phenylarsine oxide (PAO).</text>
</comment>
<comment type="biophysicochemical properties">
    <kinetics>
        <KM evidence="12">70 uM for fluorescein diphosphate (isoform 1)</KM>
        <Vmax evidence="12">6.0 umol/min/mg enzyme for fluorescein diphosphate (isoform 1)</Vmax>
    </kinetics>
</comment>
<comment type="subunit">
    <text evidence="1">Monomer (By similarity). Isoform 2: Homodimer. Can form oligomers. Dimerization is increased by oxidative stress and decreased by EGFR. Isoform 2 interacts with GRB2 (By similarity).</text>
</comment>
<comment type="subcellular location">
    <molecule>Isoform 1</molecule>
    <subcellularLocation>
        <location>Cell membrane</location>
        <topology>Single-pass type I membrane protein</topology>
    </subcellularLocation>
</comment>
<comment type="subcellular location">
    <molecule>Isoform 2</molecule>
    <subcellularLocation>
        <location>Cytoplasm</location>
    </subcellularLocation>
    <text>Predominantly cytoplasmic. A small fraction is also associated with nucleus and membrane. Insulin can induce translocation to the membrane.</text>
</comment>
<comment type="subcellular location">
    <molecule>Isoform 3</molecule>
    <subcellularLocation>
        <location>Cytoplasm</location>
    </subcellularLocation>
</comment>
<comment type="alternative products">
    <event type="alternative promoter"/>
    <event type="alternative initiation"/>
    <isoform>
        <id>P49446-1</id>
        <name>1</name>
        <name>PTPeM</name>
        <name>RPTPe</name>
        <name>tm-PTPe</name>
        <sequence type="displayed"/>
    </isoform>
    <isoform>
        <id>P49446-2</id>
        <name>2</name>
        <name>PTPeC</name>
        <name>cyt-PTPe</name>
        <sequence type="described" ref="VSP_038492"/>
    </isoform>
    <isoform>
        <id>P49446-3</id>
        <name>3</name>
        <name>p67</name>
        <sequence type="described" ref="VSP_038491"/>
    </isoform>
</comment>
<comment type="tissue specificity">
    <text evidence="8 9 10 12 13">Isoform 2 is expressed in the spleen and thymus (at protein level). Detected in fibroblasts, myeloid cells, macrophages, and T-cells but not in B-cell lines. Isoform 1 and isoform 2 are expressed predominantly in the brain, testes, and lungs, with lower levels present in lymph nodes, thymus, spleen, heart and mammary glands. Isoform 1 is expressed in osteoclasts and not in osteoblasts and its expression is related to osteoclast differentiation. It is also expressed in the erythrocytes. Isoform 2 is strongly expressed in skeletal muscle and L6 skeletal muscle cell line.</text>
</comment>
<comment type="induction">
    <molecule>Isoform 2</molecule>
    <text evidence="13">Induced by 12-O-tetradecanoylphorbol-13-acetate (TPA) and its induction is dependent upon PKC activity.</text>
</comment>
<comment type="domain">
    <text evidence="7">The tyrosine-protein phosphatase 2 domain (D2) mediates dimerization. The extreme N- and C- termini of the D2 domain act to inhibit dimerization and removal of these sequences increases dimerization and inhibits enzyme activity.</text>
</comment>
<comment type="PTM">
    <text evidence="6">A catalytically active cytoplasmic form (p65) is produced by proteolytic cleavage of either isoform 1, isoform 2 or isoform 3.</text>
</comment>
<comment type="PTM">
    <molecule>Isoform 1</molecule>
    <text evidence="1">Phosphorylated on tyrosine residues by tyrosine kinase Neu.</text>
</comment>
<comment type="PTM">
    <molecule>Isoform 2</molecule>
    <text evidence="1">Phosphorylated on tyrosine residues by tyrosine kinase Neu.</text>
</comment>
<comment type="PTM">
    <molecule>Isoform 1</molecule>
    <text evidence="1">Glycosylated.</text>
</comment>
<comment type="disruption phenotype">
    <text evidence="8 9 11">Mice show greater insulin-induced tyrosine phosphorylation of insulin receptor (IR) and insulin receptor substrate 1 (IRS-1) in the skeletal muscle. Antigen- and IgE-mediated passive systemic anaphylactic reactions are enhanced. Erythrocytes exhibit abnormal morphology, increased Ca(2+)-activated-K(+) channel activity and marked perturbation of the erythrocyte membrane tyrosine phosphoproteome.</text>
</comment>
<comment type="miscellaneous">
    <molecule>Isoform 1</molecule>
    <text>Produced by alternative promoter usage.</text>
</comment>
<comment type="miscellaneous">
    <molecule>Isoform 2</molecule>
    <text evidence="16">Produced by alternative promoter usage.</text>
</comment>
<comment type="miscellaneous">
    <molecule>Isoform 3</molecule>
    <text evidence="16">Produced by alternative initiation at Met-85 of isoform 1.</text>
</comment>
<comment type="similarity">
    <text evidence="16">Belongs to the protein-tyrosine phosphatase family. Receptor class 4 subfamily.</text>
</comment>
<reference key="1">
    <citation type="journal article" date="1995" name="J. Biol. Chem.">
        <title>Protein-tyrosine phosphatase epsilon. An isoform specifically expressed in mouse mammary tumors initiated by v-Ha-ras OR neu.</title>
        <authorList>
            <person name="Elson A."/>
            <person name="Leder P."/>
        </authorList>
    </citation>
    <scope>NUCLEOTIDE SEQUENCE [MRNA] (ISOFORM 1)</scope>
    <source>
        <strain>FVB/N</strain>
    </source>
</reference>
<reference key="2">
    <citation type="journal article" date="1995" name="Proc. Natl. Acad. Sci. U.S.A.">
        <title>Identification of a cytoplasmic, phorbol ester-inducible isoform of protein tyrosine phosphatase epsilon.</title>
        <authorList>
            <person name="Elson A."/>
            <person name="Leder P."/>
        </authorList>
    </citation>
    <scope>NUCLEOTIDE SEQUENCE [MRNA] (ISOFORM 2)</scope>
    <scope>INDUCTION</scope>
    <scope>TISSUE SPECIFICITY</scope>
</reference>
<reference key="3">
    <citation type="journal article" date="1996" name="Proc. Natl. Acad. Sci. U.S.A.">
        <title>Protein-tyrosine phosphatase activity regulates osteoclast formation and function: inhibition by alendronate.</title>
        <authorList>
            <person name="Schmidt A."/>
            <person name="Rutledge S.J."/>
            <person name="Endo N."/>
            <person name="Opas E."/>
            <person name="Tanaka H."/>
            <person name="Wesolowski G."/>
            <person name="Leu C.T."/>
            <person name="Huang Z."/>
            <person name="Ramachandaran C."/>
            <person name="Rodan S.B."/>
            <person name="Rodan G.A."/>
        </authorList>
    </citation>
    <scope>NUCLEOTIDE SEQUENCE [MRNA] (ISOFORM 1)</scope>
    <scope>FUNCTION</scope>
    <scope>BIOPHYSICOCHEMICAL PROPERTIES</scope>
    <scope>ACTIVITY REGULATION</scope>
    <scope>TISSUE SPECIFICITY</scope>
    <source>
        <tissue>Osteoclast</tissue>
    </source>
</reference>
<reference key="4">
    <citation type="submission" date="1996-02" db="EMBL/GenBank/DDBJ databases">
        <authorList>
            <person name="Mukouyama Y."/>
        </authorList>
    </citation>
    <scope>NUCLEOTIDE SEQUENCE [MRNA] (ISOFORM 1)</scope>
    <source>
        <strain>DBA/2J</strain>
    </source>
</reference>
<reference key="5">
    <citation type="submission" date="1996-06" db="EMBL/GenBank/DDBJ databases">
        <authorList>
            <person name="Hou E.W."/>
            <person name="Li S.L."/>
        </authorList>
    </citation>
    <scope>NUCLEOTIDE SEQUENCE [MRNA] (ISOFORM 1)</scope>
    <source>
        <strain>C57BL/6J</strain>
        <tissue>Brain</tissue>
        <tissue>Lung</tissue>
    </source>
</reference>
<reference key="6">
    <citation type="journal article" date="2005" name="Science">
        <title>The transcriptional landscape of the mammalian genome.</title>
        <authorList>
            <person name="Carninci P."/>
            <person name="Kasukawa T."/>
            <person name="Katayama S."/>
            <person name="Gough J."/>
            <person name="Frith M.C."/>
            <person name="Maeda N."/>
            <person name="Oyama R."/>
            <person name="Ravasi T."/>
            <person name="Lenhard B."/>
            <person name="Wells C."/>
            <person name="Kodzius R."/>
            <person name="Shimokawa K."/>
            <person name="Bajic V.B."/>
            <person name="Brenner S.E."/>
            <person name="Batalov S."/>
            <person name="Forrest A.R."/>
            <person name="Zavolan M."/>
            <person name="Davis M.J."/>
            <person name="Wilming L.G."/>
            <person name="Aidinis V."/>
            <person name="Allen J.E."/>
            <person name="Ambesi-Impiombato A."/>
            <person name="Apweiler R."/>
            <person name="Aturaliya R.N."/>
            <person name="Bailey T.L."/>
            <person name="Bansal M."/>
            <person name="Baxter L."/>
            <person name="Beisel K.W."/>
            <person name="Bersano T."/>
            <person name="Bono H."/>
            <person name="Chalk A.M."/>
            <person name="Chiu K.P."/>
            <person name="Choudhary V."/>
            <person name="Christoffels A."/>
            <person name="Clutterbuck D.R."/>
            <person name="Crowe M.L."/>
            <person name="Dalla E."/>
            <person name="Dalrymple B.P."/>
            <person name="de Bono B."/>
            <person name="Della Gatta G."/>
            <person name="di Bernardo D."/>
            <person name="Down T."/>
            <person name="Engstrom P."/>
            <person name="Fagiolini M."/>
            <person name="Faulkner G."/>
            <person name="Fletcher C.F."/>
            <person name="Fukushima T."/>
            <person name="Furuno M."/>
            <person name="Futaki S."/>
            <person name="Gariboldi M."/>
            <person name="Georgii-Hemming P."/>
            <person name="Gingeras T.R."/>
            <person name="Gojobori T."/>
            <person name="Green R.E."/>
            <person name="Gustincich S."/>
            <person name="Harbers M."/>
            <person name="Hayashi Y."/>
            <person name="Hensch T.K."/>
            <person name="Hirokawa N."/>
            <person name="Hill D."/>
            <person name="Huminiecki L."/>
            <person name="Iacono M."/>
            <person name="Ikeo K."/>
            <person name="Iwama A."/>
            <person name="Ishikawa T."/>
            <person name="Jakt M."/>
            <person name="Kanapin A."/>
            <person name="Katoh M."/>
            <person name="Kawasawa Y."/>
            <person name="Kelso J."/>
            <person name="Kitamura H."/>
            <person name="Kitano H."/>
            <person name="Kollias G."/>
            <person name="Krishnan S.P."/>
            <person name="Kruger A."/>
            <person name="Kummerfeld S.K."/>
            <person name="Kurochkin I.V."/>
            <person name="Lareau L.F."/>
            <person name="Lazarevic D."/>
            <person name="Lipovich L."/>
            <person name="Liu J."/>
            <person name="Liuni S."/>
            <person name="McWilliam S."/>
            <person name="Madan Babu M."/>
            <person name="Madera M."/>
            <person name="Marchionni L."/>
            <person name="Matsuda H."/>
            <person name="Matsuzawa S."/>
            <person name="Miki H."/>
            <person name="Mignone F."/>
            <person name="Miyake S."/>
            <person name="Morris K."/>
            <person name="Mottagui-Tabar S."/>
            <person name="Mulder N."/>
            <person name="Nakano N."/>
            <person name="Nakauchi H."/>
            <person name="Ng P."/>
            <person name="Nilsson R."/>
            <person name="Nishiguchi S."/>
            <person name="Nishikawa S."/>
            <person name="Nori F."/>
            <person name="Ohara O."/>
            <person name="Okazaki Y."/>
            <person name="Orlando V."/>
            <person name="Pang K.C."/>
            <person name="Pavan W.J."/>
            <person name="Pavesi G."/>
            <person name="Pesole G."/>
            <person name="Petrovsky N."/>
            <person name="Piazza S."/>
            <person name="Reed J."/>
            <person name="Reid J.F."/>
            <person name="Ring B.Z."/>
            <person name="Ringwald M."/>
            <person name="Rost B."/>
            <person name="Ruan Y."/>
            <person name="Salzberg S.L."/>
            <person name="Sandelin A."/>
            <person name="Schneider C."/>
            <person name="Schoenbach C."/>
            <person name="Sekiguchi K."/>
            <person name="Semple C.A."/>
            <person name="Seno S."/>
            <person name="Sessa L."/>
            <person name="Sheng Y."/>
            <person name="Shibata Y."/>
            <person name="Shimada H."/>
            <person name="Shimada K."/>
            <person name="Silva D."/>
            <person name="Sinclair B."/>
            <person name="Sperling S."/>
            <person name="Stupka E."/>
            <person name="Sugiura K."/>
            <person name="Sultana R."/>
            <person name="Takenaka Y."/>
            <person name="Taki K."/>
            <person name="Tammoja K."/>
            <person name="Tan S.L."/>
            <person name="Tang S."/>
            <person name="Taylor M.S."/>
            <person name="Tegner J."/>
            <person name="Teichmann S.A."/>
            <person name="Ueda H.R."/>
            <person name="van Nimwegen E."/>
            <person name="Verardo R."/>
            <person name="Wei C.L."/>
            <person name="Yagi K."/>
            <person name="Yamanishi H."/>
            <person name="Zabarovsky E."/>
            <person name="Zhu S."/>
            <person name="Zimmer A."/>
            <person name="Hide W."/>
            <person name="Bult C."/>
            <person name="Grimmond S.M."/>
            <person name="Teasdale R.D."/>
            <person name="Liu E.T."/>
            <person name="Brusic V."/>
            <person name="Quackenbush J."/>
            <person name="Wahlestedt C."/>
            <person name="Mattick J.S."/>
            <person name="Hume D.A."/>
            <person name="Kai C."/>
            <person name="Sasaki D."/>
            <person name="Tomaru Y."/>
            <person name="Fukuda S."/>
            <person name="Kanamori-Katayama M."/>
            <person name="Suzuki M."/>
            <person name="Aoki J."/>
            <person name="Arakawa T."/>
            <person name="Iida J."/>
            <person name="Imamura K."/>
            <person name="Itoh M."/>
            <person name="Kato T."/>
            <person name="Kawaji H."/>
            <person name="Kawagashira N."/>
            <person name="Kawashima T."/>
            <person name="Kojima M."/>
            <person name="Kondo S."/>
            <person name="Konno H."/>
            <person name="Nakano K."/>
            <person name="Ninomiya N."/>
            <person name="Nishio T."/>
            <person name="Okada M."/>
            <person name="Plessy C."/>
            <person name="Shibata K."/>
            <person name="Shiraki T."/>
            <person name="Suzuki S."/>
            <person name="Tagami M."/>
            <person name="Waki K."/>
            <person name="Watahiki A."/>
            <person name="Okamura-Oho Y."/>
            <person name="Suzuki H."/>
            <person name="Kawai J."/>
            <person name="Hayashizaki Y."/>
        </authorList>
    </citation>
    <scope>NUCLEOTIDE SEQUENCE [LARGE SCALE MRNA] (ISOFORM 2)</scope>
    <source>
        <strain>NOD</strain>
    </source>
</reference>
<reference key="7">
    <citation type="submission" date="2005-07" db="EMBL/GenBank/DDBJ databases">
        <authorList>
            <person name="Mural R.J."/>
            <person name="Adams M.D."/>
            <person name="Myers E.W."/>
            <person name="Smith H.O."/>
            <person name="Venter J.C."/>
        </authorList>
    </citation>
    <scope>NUCLEOTIDE SEQUENCE [LARGE SCALE GENOMIC DNA]</scope>
</reference>
<reference key="8">
    <citation type="journal article" date="1992" name="Mol. Biol. Rep.">
        <title>Identification and typing of members of the protein-tyrosine phosphatase gene family expressed in mouse brain.</title>
        <authorList>
            <person name="Schepens J."/>
            <person name="Zeeuwen P."/>
            <person name="Wieringa B."/>
            <person name="Hendriks W."/>
        </authorList>
    </citation>
    <scope>NUCLEOTIDE SEQUENCE [MRNA] OF 224-332</scope>
    <source>
        <strain>BALB/cJ</strain>
        <tissue>Brain</tissue>
    </source>
</reference>
<reference key="9">
    <citation type="journal article" date="1991" name="Blood">
        <title>Identification of novel protein tyrosine phosphatases of hematopoietic cells by polymerase chain reaction amplification.</title>
        <authorList>
            <person name="Yi T."/>
            <person name="Cleveland J.L."/>
            <person name="Ihle J.N."/>
        </authorList>
    </citation>
    <scope>NUCLEOTIDE SEQUENCE [MRNA] OF 224-332</scope>
    <scope>TISSUE SPECIFICITY</scope>
    <source>
        <strain>BALB/cJ</strain>
        <tissue>Myeloid leukemia cell</tissue>
    </source>
</reference>
<reference key="10">
    <citation type="journal article" date="1995" name="Biochem. J.">
        <title>A novel receptor-type protein tyrosine phosphatase with a single catalytic domain is specifically expressed in mouse brain.</title>
        <authorList>
            <person name="Hendriks W."/>
            <person name="Schepens J."/>
            <person name="Brugman C."/>
            <person name="Zeeuwen P."/>
            <person name="Wieringa B."/>
        </authorList>
    </citation>
    <scope>NUCLEOTIDE SEQUENCE [MRNA] OF 224-332</scope>
    <source>
        <strain>BALB/cJ</strain>
        <tissue>Brain</tissue>
    </source>
</reference>
<reference key="11">
    <citation type="journal article" date="1999" name="Eur. J. Biochem.">
        <title>Distinct promoters control transmembrane and cytosolic protein tyrosine phosphatase epsilon expression during macrophage differentiation.</title>
        <authorList>
            <person name="Tanuma N."/>
            <person name="Nakamura K."/>
            <person name="Kikuchi K."/>
        </authorList>
    </citation>
    <scope>ALTERNATIVE PROMOTER USAGE</scope>
</reference>
<reference key="12">
    <citation type="journal article" date="2000" name="Oncogene">
        <title>Generation of novel cytoplasmic forms of protein tyrosine phosphatase epsilon by proteolytic processing and translational control.</title>
        <authorList>
            <person name="Gil-Henn H."/>
            <person name="Volohonsky G."/>
            <person name="Toledano-Katchalski H."/>
            <person name="Gandre S."/>
            <person name="Elson A."/>
        </authorList>
    </citation>
    <scope>IDENTIFICATION (ISOFORM 3)</scope>
    <scope>ALTERNATIVE INITIATION</scope>
    <scope>SUBCELLULAR LOCATION</scope>
    <scope>PROTEOLYTIC PROCESSING</scope>
</reference>
<reference key="13">
    <citation type="journal article" date="2003" name="Mol. Cell. Biol.">
        <title>Dimerization in vivo and inhibition of the nonreceptor form of protein tyrosine phosphatase epsilon.</title>
        <authorList>
            <person name="Toledano-Katchalski H."/>
            <person name="Tiran Z."/>
            <person name="Sines T."/>
            <person name="Shani G."/>
            <person name="Granot-Attas S."/>
            <person name="den Hertog J."/>
            <person name="Elson A."/>
        </authorList>
    </citation>
    <scope>SUBUNIT</scope>
    <scope>DOMAIN</scope>
</reference>
<reference key="14">
    <citation type="journal article" date="2007" name="J. Immunol.">
        <title>Quantitative time-resolved phosphoproteomic analysis of mast cell signaling.</title>
        <authorList>
            <person name="Cao L."/>
            <person name="Yu K."/>
            <person name="Banh C."/>
            <person name="Nguyen V."/>
            <person name="Ritz A."/>
            <person name="Raphael B.J."/>
            <person name="Kawakami Y."/>
            <person name="Kawakami T."/>
            <person name="Salomon A.R."/>
        </authorList>
    </citation>
    <scope>PHOSPHORYLATION [LARGE SCALE ANALYSIS] AT TYR-695</scope>
    <scope>IDENTIFICATION BY MASS SPECTROMETRY [LARGE SCALE ANALYSIS]</scope>
    <source>
        <tissue>Mast cell</tissue>
    </source>
</reference>
<reference key="15">
    <citation type="journal article" date="2008" name="Endocrinology">
        <title>Cytosolic protein tyrosine phosphatase-epsilon is a negative regulator of insulin signaling in skeletal muscle.</title>
        <authorList>
            <person name="Aga-Mizrachi S."/>
            <person name="Brutman-Barazani T."/>
            <person name="Jacob A.I."/>
            <person name="Bak A."/>
            <person name="Elson A."/>
            <person name="Sampson S.R."/>
        </authorList>
    </citation>
    <scope>FUNCTION (ISOFORM 2)</scope>
    <scope>SUBCELLULAR LOCATION</scope>
    <scope>DISRUPTION PHENOTYPE</scope>
    <scope>TISSUE SPECIFICITY</scope>
</reference>
<reference key="16">
    <citation type="journal article" date="2008" name="Proteomics">
        <title>PTPepsilon has a critical role in signaling transduction pathways and phosphoprotein network topology in red cells.</title>
        <authorList>
            <person name="De Franceschi L."/>
            <person name="Biondani A."/>
            <person name="Carta F."/>
            <person name="Turrini F."/>
            <person name="Laudanna C."/>
            <person name="Deana R."/>
            <person name="Brunati A.M."/>
            <person name="Turretta L."/>
            <person name="Iolascon A."/>
            <person name="Perrotta S."/>
            <person name="Elson A."/>
            <person name="Bulato C."/>
            <person name="Brugnara C."/>
        </authorList>
    </citation>
    <scope>FUNCTION (ISOFORM 1)</scope>
    <scope>DISRUPTION PHENOTYPE</scope>
    <scope>TISSUE SPECIFICITY</scope>
</reference>
<reference key="17">
    <citation type="journal article" date="2009" name="Immunity">
        <title>The phagosomal proteome in interferon-gamma-activated macrophages.</title>
        <authorList>
            <person name="Trost M."/>
            <person name="English L."/>
            <person name="Lemieux S."/>
            <person name="Courcelles M."/>
            <person name="Desjardins M."/>
            <person name="Thibault P."/>
        </authorList>
    </citation>
    <scope>PHOSPHORYLATION [LARGE SCALE ANALYSIS] AT TYR-695</scope>
    <scope>IDENTIFICATION BY MASS SPECTROMETRY [LARGE SCALE ANALYSIS]</scope>
</reference>
<reference key="18">
    <citation type="journal article" date="2009" name="Scand. J. Immunol.">
        <title>Protein tyrosine phosphatase epsilon is a negative regulator of FcepsilonRI-mediated mast cell responses.</title>
        <authorList>
            <person name="Akimoto M."/>
            <person name="Mishra K."/>
            <person name="Lim K.-T."/>
            <person name="Tani N."/>
            <person name="Hisanaga S.-I."/>
            <person name="Katagiri T."/>
            <person name="Elson A."/>
            <person name="Mizuno K."/>
            <person name="Yakura H."/>
        </authorList>
    </citation>
    <scope>FUNCTION</scope>
    <scope>DISRUPTION PHENOTYPE</scope>
</reference>
<reference key="19">
    <citation type="journal article" date="2010" name="Cell">
        <title>A tissue-specific atlas of mouse protein phosphorylation and expression.</title>
        <authorList>
            <person name="Huttlin E.L."/>
            <person name="Jedrychowski M.P."/>
            <person name="Elias J.E."/>
            <person name="Goswami T."/>
            <person name="Rad R."/>
            <person name="Beausoleil S.A."/>
            <person name="Villen J."/>
            <person name="Haas W."/>
            <person name="Sowa M.E."/>
            <person name="Gygi S.P."/>
        </authorList>
    </citation>
    <scope>IDENTIFICATION BY MASS SPECTROMETRY [LARGE SCALE ANALYSIS]</scope>
    <source>
        <tissue>Brain</tissue>
        <tissue>Lung</tissue>
        <tissue>Testis</tissue>
    </source>
</reference>
<sequence>MEPFCPLLLASFSLSLARAGQGNDTTPTESNWTSTTAGPPDPGASQPLLTWLLLPLLLLLFLLAAYFFRFRKQRKAVVSSNDKKMPNGILEEQEQQRVMLLSRSPSGPKKFFPIPVEHLEEEIRVRSADDCKRFREEFNSLPSGHIQGTFELANKEENREKNRYPNILPNDHCRVILSQVDGIPCSDYINASYIDGYKEKNKFIAAQGPKQETVNDFWRMVWEQRSATIVMLTNLKERKEEKCYQYWPDQGCWTYGNIRVCVEDCVVLVDYTIRKFCIHPQLPDSCKAPRLVSQLHFTSWPDFGVPFTPIGMLKFLKKVKTLNPSHAGPIVVHCSAGVGRTGTFIVIDAMMDMIHSEQKVDVFEFVSRIRNQRPQMVQTDVQYTFIYQALLEYYLYGDTELDVSSLERHLQTLHSTATHFDKIGLEEEFRKLTNVRIMKENMRTGNLPANMKKARVIQIIPYDFNRVILSMKRGQEFTDYINASFIDGYRQKDYFMATQGPLAHTVEDFWRMVWEWKSHTIVMLTEVQEREQDKCYQYWPTEGSVTHGDITIEIKSDTLSEAISVRDFLVTFKQPLARQEEQVRMVRQFHFHGWPEVGIPAEGKGMIDLIAAVQKQQQQTGNHPITVHCSAGAGRTGTFIALSNILERVKAEGLLDVFQAVKSLRLQRPHMVQTLEQYEFCYKVVQDFIDIFSDYANFK</sequence>
<feature type="signal peptide" evidence="2">
    <location>
        <begin position="1"/>
        <end position="19"/>
    </location>
</feature>
<feature type="chain" id="PRO_0000025440" description="Receptor-type tyrosine-protein phosphatase epsilon">
    <location>
        <begin position="20"/>
        <end position="699"/>
    </location>
</feature>
<feature type="topological domain" description="Extracellular" evidence="2">
    <location>
        <begin position="20"/>
        <end position="45"/>
    </location>
</feature>
<feature type="transmembrane region" description="Helical" evidence="2">
    <location>
        <begin position="46"/>
        <end position="68"/>
    </location>
</feature>
<feature type="topological domain" description="Cytoplasmic" evidence="2">
    <location>
        <begin position="69"/>
        <end position="699"/>
    </location>
</feature>
<feature type="domain" description="Tyrosine-protein phosphatase 1" evidence="3">
    <location>
        <begin position="134"/>
        <end position="393"/>
    </location>
</feature>
<feature type="domain" description="Tyrosine-protein phosphatase 2" evidence="3">
    <location>
        <begin position="425"/>
        <end position="688"/>
    </location>
</feature>
<feature type="region of interest" description="Disordered" evidence="5">
    <location>
        <begin position="20"/>
        <end position="40"/>
    </location>
</feature>
<feature type="compositionally biased region" description="Low complexity" evidence="5">
    <location>
        <begin position="20"/>
        <end position="36"/>
    </location>
</feature>
<feature type="active site" description="Phosphocysteine intermediate" evidence="1">
    <location>
        <position position="334"/>
    </location>
</feature>
<feature type="active site" description="Phosphocysteine intermediate" evidence="1">
    <location>
        <position position="629"/>
    </location>
</feature>
<feature type="binding site" evidence="1">
    <location>
        <position position="302"/>
    </location>
    <ligand>
        <name>substrate</name>
    </ligand>
</feature>
<feature type="binding site" evidence="1">
    <location>
        <begin position="334"/>
        <end position="340"/>
    </location>
    <ligand>
        <name>substrate</name>
    </ligand>
</feature>
<feature type="binding site" evidence="1">
    <location>
        <position position="378"/>
    </location>
    <ligand>
        <name>substrate</name>
    </ligand>
</feature>
<feature type="modified residue" description="Phosphotyrosine" evidence="17 18">
    <location>
        <position position="695"/>
    </location>
</feature>
<feature type="glycosylation site" description="N-linked (GlcNAc...) asparagine" evidence="2">
    <location>
        <position position="23"/>
    </location>
</feature>
<feature type="glycosylation site" description="N-linked (GlcNAc...) asparagine" evidence="2">
    <location>
        <position position="31"/>
    </location>
</feature>
<feature type="splice variant" id="VSP_038491" description="In isoform 3." evidence="16">
    <location>
        <begin position="1"/>
        <end position="84"/>
    </location>
</feature>
<feature type="splice variant" id="VSP_038492" description="In isoform 2." evidence="14 15">
    <original>MEPFCPLLLASFSLSLARAGQGNDTTPTESNWTSTTAGPPDPGASQPLLTWLLLPLLLLLFLLAAYFFR</original>
    <variation>MSSRKNFSRLTW</variation>
    <location>
        <begin position="1"/>
        <end position="69"/>
    </location>
</feature>
<feature type="sequence conflict" description="In Ref. 6; BAE32920." evidence="16" ref="6">
    <original>E</original>
    <variation>K</variation>
    <location>
        <position position="137"/>
    </location>
</feature>
<feature type="sequence conflict" description="In Ref. 4; BAA11927." evidence="16" ref="4">
    <original>G</original>
    <variation>A</variation>
    <location>
        <position position="500"/>
    </location>
</feature>
<feature type="sequence conflict" description="In Ref. 1; AAC52281, 2; AAC52331 and 5; AAB04553." evidence="16" ref="1 2 5">
    <original>V</original>
    <variation>G</variation>
    <location>
        <position position="506"/>
    </location>
</feature>
<feature type="sequence conflict" description="In Ref. 4; BAA11927." evidence="16" ref="4">
    <original>IV</original>
    <variation>ML</variation>
    <location>
        <begin position="521"/>
        <end position="522"/>
    </location>
</feature>
<feature type="sequence conflict" description="In Ref. 1; AAC52281 and 2; AAC52331." evidence="16" ref="1 2">
    <original>M</original>
    <variation>I</variation>
    <location>
        <position position="606"/>
    </location>
</feature>
<evidence type="ECO:0000250" key="1"/>
<evidence type="ECO:0000255" key="2"/>
<evidence type="ECO:0000255" key="3">
    <source>
        <dbReference type="PROSITE-ProRule" id="PRU00160"/>
    </source>
</evidence>
<evidence type="ECO:0000255" key="4">
    <source>
        <dbReference type="PROSITE-ProRule" id="PRU10044"/>
    </source>
</evidence>
<evidence type="ECO:0000256" key="5">
    <source>
        <dbReference type="SAM" id="MobiDB-lite"/>
    </source>
</evidence>
<evidence type="ECO:0000269" key="6">
    <source>
    </source>
</evidence>
<evidence type="ECO:0000269" key="7">
    <source>
    </source>
</evidence>
<evidence type="ECO:0000269" key="8">
    <source>
    </source>
</evidence>
<evidence type="ECO:0000269" key="9">
    <source>
    </source>
</evidence>
<evidence type="ECO:0000269" key="10">
    <source>
    </source>
</evidence>
<evidence type="ECO:0000269" key="11">
    <source>
    </source>
</evidence>
<evidence type="ECO:0000269" key="12">
    <source>
    </source>
</evidence>
<evidence type="ECO:0000269" key="13">
    <source>
    </source>
</evidence>
<evidence type="ECO:0000303" key="14">
    <source>
    </source>
</evidence>
<evidence type="ECO:0000303" key="15">
    <source>
    </source>
</evidence>
<evidence type="ECO:0000305" key="16"/>
<evidence type="ECO:0007744" key="17">
    <source>
    </source>
</evidence>
<evidence type="ECO:0007744" key="18">
    <source>
    </source>
</evidence>
<name>PTPRE_MOUSE</name>
<keyword id="KW-0024">Alternative initiation</keyword>
<keyword id="KW-0877">Alternative promoter usage</keyword>
<keyword id="KW-1003">Cell membrane</keyword>
<keyword id="KW-0963">Cytoplasm</keyword>
<keyword id="KW-0325">Glycoprotein</keyword>
<keyword id="KW-0378">Hydrolase</keyword>
<keyword id="KW-0472">Membrane</keyword>
<keyword id="KW-0597">Phosphoprotein</keyword>
<keyword id="KW-0904">Protein phosphatase</keyword>
<keyword id="KW-1185">Reference proteome</keyword>
<keyword id="KW-0677">Repeat</keyword>
<keyword id="KW-0732">Signal</keyword>
<keyword id="KW-0812">Transmembrane</keyword>
<keyword id="KW-1133">Transmembrane helix</keyword>